<comment type="function">
    <text evidence="2">One of the proteins required for the normal export of preproteins out of the cell cytoplasm. It is a molecular chaperone that binds to a subset of precursor proteins, maintaining them in a translocation-competent state. It specifically binds to its receptor SecA. Also required for the secretion of HasA via an ABC transporter system.</text>
</comment>
<comment type="subunit">
    <text evidence="1">Homotetramer, a dimer of dimers. One homotetramer interacts with 1 SecA dimer (By similarity).</text>
</comment>
<comment type="subcellular location">
    <subcellularLocation>
        <location evidence="1">Cytoplasm</location>
    </subcellularLocation>
</comment>
<comment type="similarity">
    <text evidence="3">Belongs to the SecB family.</text>
</comment>
<evidence type="ECO:0000250" key="1"/>
<evidence type="ECO:0000269" key="2">
    <source>
    </source>
</evidence>
<evidence type="ECO:0000305" key="3"/>
<keyword id="KW-0143">Chaperone</keyword>
<keyword id="KW-0963">Cytoplasm</keyword>
<keyword id="KW-0653">Protein transport</keyword>
<keyword id="KW-0811">Translocation</keyword>
<keyword id="KW-0813">Transport</keyword>
<protein>
    <recommendedName>
        <fullName>Protein-export protein SecB</fullName>
    </recommendedName>
</protein>
<feature type="chain" id="PRO_0000055416" description="Protein-export protein SecB">
    <location>
        <begin position="1"/>
        <end position="156"/>
    </location>
</feature>
<sequence>MSEQNSTEMAFQIQRIYTKDISFEAPNAPQVFQQEWQPEVKLDLDTASSQLADEVYEVVLRVTVTATLGEETAFLCEVQQAGIFSVAGIEGTQLAHCLGAYCPNILFPYARECITSLVSRGTFPQLNLAPVNFDALFMNYLQQQAEGEGAAPHQDA</sequence>
<organism>
    <name type="scientific">Serratia marcescens</name>
    <dbReference type="NCBI Taxonomy" id="615"/>
    <lineage>
        <taxon>Bacteria</taxon>
        <taxon>Pseudomonadati</taxon>
        <taxon>Pseudomonadota</taxon>
        <taxon>Gammaproteobacteria</taxon>
        <taxon>Enterobacterales</taxon>
        <taxon>Yersiniaceae</taxon>
        <taxon>Serratia</taxon>
    </lineage>
</organism>
<gene>
    <name type="primary">secB</name>
</gene>
<accession>Q8KRM2</accession>
<proteinExistence type="inferred from homology"/>
<dbReference type="EMBL" id="AF528189">
    <property type="protein sequence ID" value="AAM89273.1"/>
    <property type="molecule type" value="Genomic_DNA"/>
</dbReference>
<dbReference type="RefSeq" id="WP_004931139.1">
    <property type="nucleotide sequence ID" value="NZ_WUWF01000031.1"/>
</dbReference>
<dbReference type="SMR" id="Q8KRM2"/>
<dbReference type="STRING" id="273526.SMDB11_4041"/>
<dbReference type="GeneID" id="93699234"/>
<dbReference type="OrthoDB" id="9795145at2"/>
<dbReference type="GO" id="GO:0005737">
    <property type="term" value="C:cytoplasm"/>
    <property type="evidence" value="ECO:0007669"/>
    <property type="project" value="UniProtKB-SubCell"/>
</dbReference>
<dbReference type="GO" id="GO:0051082">
    <property type="term" value="F:unfolded protein binding"/>
    <property type="evidence" value="ECO:0007669"/>
    <property type="project" value="InterPro"/>
</dbReference>
<dbReference type="GO" id="GO:0006457">
    <property type="term" value="P:protein folding"/>
    <property type="evidence" value="ECO:0007669"/>
    <property type="project" value="UniProtKB-UniRule"/>
</dbReference>
<dbReference type="GO" id="GO:0051262">
    <property type="term" value="P:protein tetramerization"/>
    <property type="evidence" value="ECO:0007669"/>
    <property type="project" value="InterPro"/>
</dbReference>
<dbReference type="GO" id="GO:0015031">
    <property type="term" value="P:protein transport"/>
    <property type="evidence" value="ECO:0007669"/>
    <property type="project" value="UniProtKB-UniRule"/>
</dbReference>
<dbReference type="CDD" id="cd00557">
    <property type="entry name" value="Translocase_SecB"/>
    <property type="match status" value="1"/>
</dbReference>
<dbReference type="FunFam" id="3.10.420.10:FF:000001">
    <property type="entry name" value="Protein-export chaperone SecB"/>
    <property type="match status" value="1"/>
</dbReference>
<dbReference type="Gene3D" id="3.10.420.10">
    <property type="entry name" value="SecB-like"/>
    <property type="match status" value="1"/>
</dbReference>
<dbReference type="HAMAP" id="MF_00821">
    <property type="entry name" value="SecB"/>
    <property type="match status" value="1"/>
</dbReference>
<dbReference type="InterPro" id="IPR003708">
    <property type="entry name" value="SecB"/>
</dbReference>
<dbReference type="InterPro" id="IPR035958">
    <property type="entry name" value="SecB-like_sf"/>
</dbReference>
<dbReference type="NCBIfam" id="NF004390">
    <property type="entry name" value="PRK05751.1-1"/>
    <property type="match status" value="1"/>
</dbReference>
<dbReference type="NCBIfam" id="NF004393">
    <property type="entry name" value="PRK05751.1-4"/>
    <property type="match status" value="1"/>
</dbReference>
<dbReference type="NCBIfam" id="TIGR00809">
    <property type="entry name" value="secB"/>
    <property type="match status" value="1"/>
</dbReference>
<dbReference type="PANTHER" id="PTHR36918">
    <property type="match status" value="1"/>
</dbReference>
<dbReference type="PANTHER" id="PTHR36918:SF1">
    <property type="entry name" value="PROTEIN-EXPORT PROTEIN SECB"/>
    <property type="match status" value="1"/>
</dbReference>
<dbReference type="Pfam" id="PF02556">
    <property type="entry name" value="SecB"/>
    <property type="match status" value="1"/>
</dbReference>
<dbReference type="PRINTS" id="PR01594">
    <property type="entry name" value="SECBCHAPRONE"/>
</dbReference>
<dbReference type="SUPFAM" id="SSF54611">
    <property type="entry name" value="SecB-like"/>
    <property type="match status" value="1"/>
</dbReference>
<name>SECB_SERMA</name>
<reference key="1">
    <citation type="journal article" date="2003" name="J. Bacteriol.">
        <title>The SecB chaperone is bifunctional in Serratia marcescens: SecB is involved in the Sec pathway and required for HasA secretion by the ABC transporter.</title>
        <authorList>
            <person name="Sapriel G."/>
            <person name="Wandersman C."/>
            <person name="Delepelaire P."/>
        </authorList>
    </citation>
    <scope>NUCLEOTIDE SEQUENCE [GENOMIC DNA]</scope>
    <scope>FUNCTION</scope>
</reference>